<reference key="1">
    <citation type="submission" date="2008-05" db="EMBL/GenBank/DDBJ databases">
        <title>Complete sequence of chromosome 1 of Ralstonia pickettii 12J.</title>
        <authorList>
            <person name="Lucas S."/>
            <person name="Copeland A."/>
            <person name="Lapidus A."/>
            <person name="Glavina del Rio T."/>
            <person name="Dalin E."/>
            <person name="Tice H."/>
            <person name="Bruce D."/>
            <person name="Goodwin L."/>
            <person name="Pitluck S."/>
            <person name="Meincke L."/>
            <person name="Brettin T."/>
            <person name="Detter J.C."/>
            <person name="Han C."/>
            <person name="Kuske C.R."/>
            <person name="Schmutz J."/>
            <person name="Larimer F."/>
            <person name="Land M."/>
            <person name="Hauser L."/>
            <person name="Kyrpides N."/>
            <person name="Mikhailova N."/>
            <person name="Marsh T."/>
            <person name="Richardson P."/>
        </authorList>
    </citation>
    <scope>NUCLEOTIDE SEQUENCE [LARGE SCALE GENOMIC DNA]</scope>
    <source>
        <strain>12J</strain>
    </source>
</reference>
<accession>B2U7G7</accession>
<protein>
    <recommendedName>
        <fullName evidence="1">Serine hydroxymethyltransferase</fullName>
        <shortName evidence="1">SHMT</shortName>
        <shortName evidence="1">Serine methylase</shortName>
        <ecNumber evidence="1">2.1.2.1</ecNumber>
    </recommendedName>
</protein>
<organism>
    <name type="scientific">Ralstonia pickettii (strain 12J)</name>
    <dbReference type="NCBI Taxonomy" id="402626"/>
    <lineage>
        <taxon>Bacteria</taxon>
        <taxon>Pseudomonadati</taxon>
        <taxon>Pseudomonadota</taxon>
        <taxon>Betaproteobacteria</taxon>
        <taxon>Burkholderiales</taxon>
        <taxon>Burkholderiaceae</taxon>
        <taxon>Ralstonia</taxon>
    </lineage>
</organism>
<proteinExistence type="inferred from homology"/>
<evidence type="ECO:0000255" key="1">
    <source>
        <dbReference type="HAMAP-Rule" id="MF_00051"/>
    </source>
</evidence>
<feature type="chain" id="PRO_1000091571" description="Serine hydroxymethyltransferase">
    <location>
        <begin position="1"/>
        <end position="415"/>
    </location>
</feature>
<feature type="binding site" evidence="1">
    <location>
        <position position="122"/>
    </location>
    <ligand>
        <name>(6S)-5,6,7,8-tetrahydrofolate</name>
        <dbReference type="ChEBI" id="CHEBI:57453"/>
    </ligand>
</feature>
<feature type="binding site" evidence="1">
    <location>
        <begin position="126"/>
        <end position="128"/>
    </location>
    <ligand>
        <name>(6S)-5,6,7,8-tetrahydrofolate</name>
        <dbReference type="ChEBI" id="CHEBI:57453"/>
    </ligand>
</feature>
<feature type="site" description="Plays an important role in substrate specificity" evidence="1">
    <location>
        <position position="229"/>
    </location>
</feature>
<feature type="modified residue" description="N6-(pyridoxal phosphate)lysine" evidence="1">
    <location>
        <position position="230"/>
    </location>
</feature>
<name>GLYA_RALPJ</name>
<dbReference type="EC" id="2.1.2.1" evidence="1"/>
<dbReference type="EMBL" id="CP001068">
    <property type="protein sequence ID" value="ACD25829.1"/>
    <property type="molecule type" value="Genomic_DNA"/>
</dbReference>
<dbReference type="SMR" id="B2U7G7"/>
<dbReference type="STRING" id="402626.Rpic_0678"/>
<dbReference type="KEGG" id="rpi:Rpic_0678"/>
<dbReference type="PATRIC" id="fig|402626.5.peg.1875"/>
<dbReference type="eggNOG" id="COG0112">
    <property type="taxonomic scope" value="Bacteria"/>
</dbReference>
<dbReference type="HOGENOM" id="CLU_022477_2_1_4"/>
<dbReference type="UniPathway" id="UPA00193"/>
<dbReference type="UniPathway" id="UPA00288">
    <property type="reaction ID" value="UER01023"/>
</dbReference>
<dbReference type="GO" id="GO:0005829">
    <property type="term" value="C:cytosol"/>
    <property type="evidence" value="ECO:0007669"/>
    <property type="project" value="TreeGrafter"/>
</dbReference>
<dbReference type="GO" id="GO:0004372">
    <property type="term" value="F:glycine hydroxymethyltransferase activity"/>
    <property type="evidence" value="ECO:0007669"/>
    <property type="project" value="UniProtKB-UniRule"/>
</dbReference>
<dbReference type="GO" id="GO:0030170">
    <property type="term" value="F:pyridoxal phosphate binding"/>
    <property type="evidence" value="ECO:0007669"/>
    <property type="project" value="UniProtKB-UniRule"/>
</dbReference>
<dbReference type="GO" id="GO:0019264">
    <property type="term" value="P:glycine biosynthetic process from serine"/>
    <property type="evidence" value="ECO:0007669"/>
    <property type="project" value="UniProtKB-UniRule"/>
</dbReference>
<dbReference type="GO" id="GO:0035999">
    <property type="term" value="P:tetrahydrofolate interconversion"/>
    <property type="evidence" value="ECO:0007669"/>
    <property type="project" value="UniProtKB-UniRule"/>
</dbReference>
<dbReference type="CDD" id="cd00378">
    <property type="entry name" value="SHMT"/>
    <property type="match status" value="1"/>
</dbReference>
<dbReference type="FunFam" id="3.40.640.10:FF:000001">
    <property type="entry name" value="Serine hydroxymethyltransferase"/>
    <property type="match status" value="1"/>
</dbReference>
<dbReference type="FunFam" id="3.90.1150.10:FF:000003">
    <property type="entry name" value="Serine hydroxymethyltransferase"/>
    <property type="match status" value="1"/>
</dbReference>
<dbReference type="Gene3D" id="3.90.1150.10">
    <property type="entry name" value="Aspartate Aminotransferase, domain 1"/>
    <property type="match status" value="1"/>
</dbReference>
<dbReference type="Gene3D" id="3.40.640.10">
    <property type="entry name" value="Type I PLP-dependent aspartate aminotransferase-like (Major domain)"/>
    <property type="match status" value="1"/>
</dbReference>
<dbReference type="HAMAP" id="MF_00051">
    <property type="entry name" value="SHMT"/>
    <property type="match status" value="1"/>
</dbReference>
<dbReference type="InterPro" id="IPR015424">
    <property type="entry name" value="PyrdxlP-dep_Trfase"/>
</dbReference>
<dbReference type="InterPro" id="IPR015421">
    <property type="entry name" value="PyrdxlP-dep_Trfase_major"/>
</dbReference>
<dbReference type="InterPro" id="IPR015422">
    <property type="entry name" value="PyrdxlP-dep_Trfase_small"/>
</dbReference>
<dbReference type="InterPro" id="IPR001085">
    <property type="entry name" value="Ser_HO-MeTrfase"/>
</dbReference>
<dbReference type="InterPro" id="IPR049943">
    <property type="entry name" value="Ser_HO-MeTrfase-like"/>
</dbReference>
<dbReference type="InterPro" id="IPR019798">
    <property type="entry name" value="Ser_HO-MeTrfase_PLP_BS"/>
</dbReference>
<dbReference type="InterPro" id="IPR039429">
    <property type="entry name" value="SHMT-like_dom"/>
</dbReference>
<dbReference type="NCBIfam" id="NF000586">
    <property type="entry name" value="PRK00011.1"/>
    <property type="match status" value="1"/>
</dbReference>
<dbReference type="PANTHER" id="PTHR11680">
    <property type="entry name" value="SERINE HYDROXYMETHYLTRANSFERASE"/>
    <property type="match status" value="1"/>
</dbReference>
<dbReference type="PANTHER" id="PTHR11680:SF50">
    <property type="entry name" value="SERINE HYDROXYMETHYLTRANSFERASE"/>
    <property type="match status" value="1"/>
</dbReference>
<dbReference type="Pfam" id="PF00464">
    <property type="entry name" value="SHMT"/>
    <property type="match status" value="1"/>
</dbReference>
<dbReference type="PIRSF" id="PIRSF000412">
    <property type="entry name" value="SHMT"/>
    <property type="match status" value="1"/>
</dbReference>
<dbReference type="SUPFAM" id="SSF53383">
    <property type="entry name" value="PLP-dependent transferases"/>
    <property type="match status" value="1"/>
</dbReference>
<dbReference type="PROSITE" id="PS00096">
    <property type="entry name" value="SHMT"/>
    <property type="match status" value="1"/>
</dbReference>
<gene>
    <name evidence="1" type="primary">glyA</name>
    <name type="ordered locus">Rpic_0678</name>
</gene>
<keyword id="KW-0028">Amino-acid biosynthesis</keyword>
<keyword id="KW-0963">Cytoplasm</keyword>
<keyword id="KW-0554">One-carbon metabolism</keyword>
<keyword id="KW-0663">Pyridoxal phosphate</keyword>
<keyword id="KW-0808">Transferase</keyword>
<sequence length="415" mass="44913">MFERSRYTIDQIDPEIFAAIQKENQRQEDHIELIASENYTSPAVMAAQGSQLTNKYAEGYPGKRYYGGCEYVDVVEQLAIDRVKQLFGAEAANVQPNSGSQANQGVFFAVLKPGDTIMGMSLAEGGHLTHGMALNMSGKWFNVVSYGLNAQEDIDYDALEALAQEKKPKLIIAGASAFALRIDFERIGKIAKSIGAYFMVDMAHYAGLIAAGVYPNPVPHADFVTTTTHKSLRGPRGGVILMKAEHEKAINSAIFPGIQGGPLMHVIAGKAVAFKEALSPEFKAYQEQVVKNAAAMAETLMARGLRIVSGRTESHVMLVDLRAKKITGKEAEKVLGDAHITVNKNAIPNDPEKPFVTSGVRLGSPAMTTRGFKEAEAVKVAHLIADVLDNPHDEANIAAVRAKVAELTKQFPVYG</sequence>
<comment type="function">
    <text evidence="1">Catalyzes the reversible interconversion of serine and glycine with tetrahydrofolate (THF) serving as the one-carbon carrier. This reaction serves as the major source of one-carbon groups required for the biosynthesis of purines, thymidylate, methionine, and other important biomolecules. Also exhibits THF-independent aldolase activity toward beta-hydroxyamino acids, producing glycine and aldehydes, via a retro-aldol mechanism.</text>
</comment>
<comment type="catalytic activity">
    <reaction evidence="1">
        <text>(6R)-5,10-methylene-5,6,7,8-tetrahydrofolate + glycine + H2O = (6S)-5,6,7,8-tetrahydrofolate + L-serine</text>
        <dbReference type="Rhea" id="RHEA:15481"/>
        <dbReference type="ChEBI" id="CHEBI:15377"/>
        <dbReference type="ChEBI" id="CHEBI:15636"/>
        <dbReference type="ChEBI" id="CHEBI:33384"/>
        <dbReference type="ChEBI" id="CHEBI:57305"/>
        <dbReference type="ChEBI" id="CHEBI:57453"/>
        <dbReference type="EC" id="2.1.2.1"/>
    </reaction>
</comment>
<comment type="cofactor">
    <cofactor evidence="1">
        <name>pyridoxal 5'-phosphate</name>
        <dbReference type="ChEBI" id="CHEBI:597326"/>
    </cofactor>
</comment>
<comment type="pathway">
    <text evidence="1">One-carbon metabolism; tetrahydrofolate interconversion.</text>
</comment>
<comment type="pathway">
    <text evidence="1">Amino-acid biosynthesis; glycine biosynthesis; glycine from L-serine: step 1/1.</text>
</comment>
<comment type="subunit">
    <text evidence="1">Homodimer.</text>
</comment>
<comment type="subcellular location">
    <subcellularLocation>
        <location evidence="1">Cytoplasm</location>
    </subcellularLocation>
</comment>
<comment type="similarity">
    <text evidence="1">Belongs to the SHMT family.</text>
</comment>